<gene>
    <name type="ordered locus">ECU08_0330</name>
</gene>
<organism>
    <name type="scientific">Encephalitozoon cuniculi (strain GB-M1)</name>
    <name type="common">Microsporidian parasite</name>
    <dbReference type="NCBI Taxonomy" id="284813"/>
    <lineage>
        <taxon>Eukaryota</taxon>
        <taxon>Fungi</taxon>
        <taxon>Fungi incertae sedis</taxon>
        <taxon>Microsporidia</taxon>
        <taxon>Unikaryonidae</taxon>
        <taxon>Encephalitozoon</taxon>
    </lineage>
</organism>
<sequence>MGIKKKRQSKRLTTRKREGMLKRARANERKKRRMDRKMQAKVERIPPSVLRTDEENMQYAEIKRMAKLRKMEYDEALRNSEKKEAYLDGILRLVSKSDVVIEVIDARDPDSSRNSEAEKIVSEHGKKLIMVLNYTQYVPREVVDEWKVHLKRDGNDCIEVTEEDMRQIGKETRIGIFGNPGSGKNFVLRGISRILEEKPNSVVVSVPLSKVTLSSILRGCHGLMGIAFRDYIEAIVKRIDRGEVSLRHGIPEFSNAEELLESICDVHGIRDESRSVCYMKASERFLEDFLRHKILFWRRVYSDENDLSFAFCQ</sequence>
<dbReference type="EMBL" id="AL590448">
    <property type="protein sequence ID" value="CAD26338.2"/>
    <property type="molecule type" value="Genomic_DNA"/>
</dbReference>
<dbReference type="RefSeq" id="NP_597162.2">
    <property type="nucleotide sequence ID" value="NM_001041771.2"/>
</dbReference>
<dbReference type="SMR" id="Q8SUT1"/>
<dbReference type="STRING" id="284813.Q8SUT1"/>
<dbReference type="GeneID" id="859584"/>
<dbReference type="KEGG" id="ecu:ECU08_0330"/>
<dbReference type="VEuPathDB" id="MicrosporidiaDB:ECU08_0330"/>
<dbReference type="HOGENOM" id="CLU_891658_0_0_1"/>
<dbReference type="InParanoid" id="Q8SUT1"/>
<dbReference type="OrthoDB" id="444945at2759"/>
<dbReference type="Proteomes" id="UP000000819">
    <property type="component" value="Chromosome VIII"/>
</dbReference>
<dbReference type="GO" id="GO:0005730">
    <property type="term" value="C:nucleolus"/>
    <property type="evidence" value="ECO:0007669"/>
    <property type="project" value="UniProtKB-SubCell"/>
</dbReference>
<dbReference type="GO" id="GO:0005525">
    <property type="term" value="F:GTP binding"/>
    <property type="evidence" value="ECO:0007669"/>
    <property type="project" value="UniProtKB-KW"/>
</dbReference>
<dbReference type="GO" id="GO:0042254">
    <property type="term" value="P:ribosome biogenesis"/>
    <property type="evidence" value="ECO:0007669"/>
    <property type="project" value="UniProtKB-KW"/>
</dbReference>
<dbReference type="CDD" id="cd01849">
    <property type="entry name" value="YlqF_related_GTPase"/>
    <property type="match status" value="1"/>
</dbReference>
<dbReference type="Gene3D" id="3.40.50.300">
    <property type="entry name" value="P-loop containing nucleotide triphosphate hydrolases"/>
    <property type="match status" value="1"/>
</dbReference>
<dbReference type="InterPro" id="IPR027417">
    <property type="entry name" value="P-loop_NTPase"/>
</dbReference>
<dbReference type="InterPro" id="IPR050755">
    <property type="entry name" value="TRAFAC_YlqF/YawG_RiboMat"/>
</dbReference>
<dbReference type="PANTHER" id="PTHR11089">
    <property type="entry name" value="GTP-BINDING PROTEIN-RELATED"/>
    <property type="match status" value="1"/>
</dbReference>
<dbReference type="PANTHER" id="PTHR11089:SF30">
    <property type="entry name" value="GUANINE NUCLEOTIDE-BINDING PROTEIN-LIKE 3 HOMOLOG"/>
    <property type="match status" value="1"/>
</dbReference>
<dbReference type="SUPFAM" id="SSF52540">
    <property type="entry name" value="P-loop containing nucleoside triphosphate hydrolases"/>
    <property type="match status" value="1"/>
</dbReference>
<evidence type="ECO:0000250" key="1"/>
<evidence type="ECO:0000255" key="2"/>
<evidence type="ECO:0000256" key="3">
    <source>
        <dbReference type="SAM" id="MobiDB-lite"/>
    </source>
</evidence>
<evidence type="ECO:0000269" key="4">
    <source>
    </source>
</evidence>
<evidence type="ECO:0000305" key="5"/>
<comment type="function">
    <text evidence="1">Required for normal processing of ribosomal pre-rRNA. Required for cell proliferation. Binds GTP (By similarity).</text>
</comment>
<comment type="subcellular location">
    <subcellularLocation>
        <location evidence="1">Nucleus</location>
        <location evidence="1">Nucleolus</location>
    </subcellularLocation>
</comment>
<comment type="developmental stage">
    <text evidence="4">Expressed in late sporogonial stages.</text>
</comment>
<comment type="similarity">
    <text evidence="5">Belongs to the MMR1/HSR1 GTP-binding protein family.</text>
</comment>
<protein>
    <recommendedName>
        <fullName>Guanine nucleotide-binding protein-like 3-like protein</fullName>
    </recommendedName>
</protein>
<name>GNL3L_ENCCU</name>
<accession>Q8SUT1</accession>
<keyword id="KW-0342">GTP-binding</keyword>
<keyword id="KW-0547">Nucleotide-binding</keyword>
<keyword id="KW-0539">Nucleus</keyword>
<keyword id="KW-1185">Reference proteome</keyword>
<keyword id="KW-0690">Ribosome biogenesis</keyword>
<feature type="chain" id="PRO_0000383044" description="Guanine nucleotide-binding protein-like 3-like protein">
    <location>
        <begin position="1"/>
        <end position="313"/>
    </location>
</feature>
<feature type="region of interest" description="Disordered" evidence="3">
    <location>
        <begin position="1"/>
        <end position="41"/>
    </location>
</feature>
<feature type="compositionally biased region" description="Basic residues" evidence="3">
    <location>
        <begin position="1"/>
        <end position="14"/>
    </location>
</feature>
<feature type="compositionally biased region" description="Basic and acidic residues" evidence="3">
    <location>
        <begin position="15"/>
        <end position="27"/>
    </location>
</feature>
<feature type="binding site" evidence="2">
    <location>
        <begin position="95"/>
        <end position="98"/>
    </location>
    <ligand>
        <name>GTP</name>
        <dbReference type="ChEBI" id="CHEBI:37565"/>
    </ligand>
</feature>
<feature type="binding site" evidence="2">
    <location>
        <begin position="178"/>
        <end position="185"/>
    </location>
    <ligand>
        <name>GTP</name>
        <dbReference type="ChEBI" id="CHEBI:37565"/>
    </ligand>
</feature>
<feature type="binding site" evidence="2">
    <location>
        <begin position="212"/>
        <end position="215"/>
    </location>
    <ligand>
        <name>GTP</name>
        <dbReference type="ChEBI" id="CHEBI:37565"/>
    </ligand>
</feature>
<reference key="1">
    <citation type="journal article" date="2001" name="Nature">
        <title>Genome sequence and gene compaction of the eukaryote parasite Encephalitozoon cuniculi.</title>
        <authorList>
            <person name="Katinka M.D."/>
            <person name="Duprat S."/>
            <person name="Cornillot E."/>
            <person name="Metenier G."/>
            <person name="Thomarat F."/>
            <person name="Prensier G."/>
            <person name="Barbe V."/>
            <person name="Peyretaillade E."/>
            <person name="Brottier P."/>
            <person name="Wincker P."/>
            <person name="Delbac F."/>
            <person name="El Alaoui H."/>
            <person name="Peyret P."/>
            <person name="Saurin W."/>
            <person name="Gouy M."/>
            <person name="Weissenbach J."/>
            <person name="Vivares C.P."/>
        </authorList>
    </citation>
    <scope>NUCLEOTIDE SEQUENCE [LARGE SCALE GENOMIC DNA]</scope>
    <source>
        <strain>GB-M1</strain>
    </source>
</reference>
<reference key="2">
    <citation type="journal article" date="2009" name="BMC Genomics">
        <title>Identification of transcriptional signals in Encephalitozoon cuniculi widespread among Microsporidia phylum: support for accurate structural genome annotation.</title>
        <authorList>
            <person name="Peyretaillade E."/>
            <person name="Goncalves O."/>
            <person name="Terrat S."/>
            <person name="Dugat-Bony E."/>
            <person name="Wincker P."/>
            <person name="Cornman R.S."/>
            <person name="Evans J.D."/>
            <person name="Delbac F."/>
            <person name="Peyret P."/>
        </authorList>
    </citation>
    <scope>GENOME REANNOTATION</scope>
    <source>
        <strain>GB-M1</strain>
    </source>
</reference>
<reference key="3">
    <citation type="journal article" date="2006" name="Proteomics">
        <title>Proteomic analysis of the eukaryotic parasite Encephalitozoon cuniculi (microsporidia): a reference map for proteins expressed in late sporogonial stages.</title>
        <authorList>
            <person name="Brosson D."/>
            <person name="Kuhn L."/>
            <person name="Delbac F."/>
            <person name="Garin J."/>
            <person name="Vivares C.P."/>
            <person name="Texier C."/>
        </authorList>
    </citation>
    <scope>IDENTIFICATION BY MASS SPECTROMETRY [LARGE SCALE ANALYSIS]</scope>
    <scope>DEVELOPMENTAL STAGE</scope>
    <scope>SUBCELLULAR LOCATION</scope>
</reference>
<proteinExistence type="evidence at protein level"/>